<organism>
    <name type="scientific">Passer montanus</name>
    <name type="common">Eurasian tree sparrow</name>
    <dbReference type="NCBI Taxonomy" id="9160"/>
    <lineage>
        <taxon>Eukaryota</taxon>
        <taxon>Metazoa</taxon>
        <taxon>Chordata</taxon>
        <taxon>Craniata</taxon>
        <taxon>Vertebrata</taxon>
        <taxon>Euteleostomi</taxon>
        <taxon>Archelosauria</taxon>
        <taxon>Archosauria</taxon>
        <taxon>Dinosauria</taxon>
        <taxon>Saurischia</taxon>
        <taxon>Theropoda</taxon>
        <taxon>Coelurosauria</taxon>
        <taxon>Aves</taxon>
        <taxon>Neognathae</taxon>
        <taxon>Neoaves</taxon>
        <taxon>Telluraves</taxon>
        <taxon>Australaves</taxon>
        <taxon>Passeriformes</taxon>
        <taxon>Passeroidea</taxon>
        <taxon>Passeridae</taxon>
        <taxon>Passer</taxon>
    </lineage>
</organism>
<keyword id="KW-0903">Direct protein sequencing</keyword>
<keyword id="KW-0349">Heme</keyword>
<keyword id="KW-0408">Iron</keyword>
<keyword id="KW-0479">Metal-binding</keyword>
<keyword id="KW-0561">Oxygen transport</keyword>
<keyword id="KW-0813">Transport</keyword>
<sequence>VLSPADKSNVKGVFAKIGGQAEEYGADALERMFATYPQTKTYFPHFDLGKGSAQVKGHGKKVAAALVEAVNNIDDLAGALSKLSDLHAQKLRVDPVNFKLLGQCFLVVVATGNPALLTPEVHAPLDKFLCAVGTVLTAKYR</sequence>
<name>HBA_PASMO</name>
<accession>P07407</accession>
<dbReference type="PIR" id="A24625">
    <property type="entry name" value="A24625"/>
</dbReference>
<dbReference type="SMR" id="P07407"/>
<dbReference type="GO" id="GO:0072562">
    <property type="term" value="C:blood microparticle"/>
    <property type="evidence" value="ECO:0007669"/>
    <property type="project" value="TreeGrafter"/>
</dbReference>
<dbReference type="GO" id="GO:0031838">
    <property type="term" value="C:haptoglobin-hemoglobin complex"/>
    <property type="evidence" value="ECO:0007669"/>
    <property type="project" value="TreeGrafter"/>
</dbReference>
<dbReference type="GO" id="GO:0005833">
    <property type="term" value="C:hemoglobin complex"/>
    <property type="evidence" value="ECO:0007669"/>
    <property type="project" value="InterPro"/>
</dbReference>
<dbReference type="GO" id="GO:0031720">
    <property type="term" value="F:haptoglobin binding"/>
    <property type="evidence" value="ECO:0007669"/>
    <property type="project" value="TreeGrafter"/>
</dbReference>
<dbReference type="GO" id="GO:0020037">
    <property type="term" value="F:heme binding"/>
    <property type="evidence" value="ECO:0007669"/>
    <property type="project" value="InterPro"/>
</dbReference>
<dbReference type="GO" id="GO:0005506">
    <property type="term" value="F:iron ion binding"/>
    <property type="evidence" value="ECO:0007669"/>
    <property type="project" value="InterPro"/>
</dbReference>
<dbReference type="GO" id="GO:0043177">
    <property type="term" value="F:organic acid binding"/>
    <property type="evidence" value="ECO:0007669"/>
    <property type="project" value="TreeGrafter"/>
</dbReference>
<dbReference type="GO" id="GO:0019825">
    <property type="term" value="F:oxygen binding"/>
    <property type="evidence" value="ECO:0007669"/>
    <property type="project" value="InterPro"/>
</dbReference>
<dbReference type="GO" id="GO:0005344">
    <property type="term" value="F:oxygen carrier activity"/>
    <property type="evidence" value="ECO:0007669"/>
    <property type="project" value="UniProtKB-KW"/>
</dbReference>
<dbReference type="GO" id="GO:0004601">
    <property type="term" value="F:peroxidase activity"/>
    <property type="evidence" value="ECO:0007669"/>
    <property type="project" value="TreeGrafter"/>
</dbReference>
<dbReference type="GO" id="GO:0042744">
    <property type="term" value="P:hydrogen peroxide catabolic process"/>
    <property type="evidence" value="ECO:0007669"/>
    <property type="project" value="TreeGrafter"/>
</dbReference>
<dbReference type="CDD" id="cd08927">
    <property type="entry name" value="Hb-alpha-like"/>
    <property type="match status" value="1"/>
</dbReference>
<dbReference type="FunFam" id="1.10.490.10:FF:000002">
    <property type="entry name" value="Hemoglobin subunit alpha"/>
    <property type="match status" value="1"/>
</dbReference>
<dbReference type="Gene3D" id="1.10.490.10">
    <property type="entry name" value="Globins"/>
    <property type="match status" value="1"/>
</dbReference>
<dbReference type="InterPro" id="IPR000971">
    <property type="entry name" value="Globin"/>
</dbReference>
<dbReference type="InterPro" id="IPR009050">
    <property type="entry name" value="Globin-like_sf"/>
</dbReference>
<dbReference type="InterPro" id="IPR012292">
    <property type="entry name" value="Globin/Proto"/>
</dbReference>
<dbReference type="InterPro" id="IPR002338">
    <property type="entry name" value="Hemoglobin_a-typ"/>
</dbReference>
<dbReference type="InterPro" id="IPR050056">
    <property type="entry name" value="Hemoglobin_oxygen_transport"/>
</dbReference>
<dbReference type="InterPro" id="IPR002339">
    <property type="entry name" value="Hemoglobin_pi"/>
</dbReference>
<dbReference type="PANTHER" id="PTHR11442">
    <property type="entry name" value="HEMOGLOBIN FAMILY MEMBER"/>
    <property type="match status" value="1"/>
</dbReference>
<dbReference type="PANTHER" id="PTHR11442:SF48">
    <property type="entry name" value="HEMOGLOBIN SUBUNIT ALPHA"/>
    <property type="match status" value="1"/>
</dbReference>
<dbReference type="Pfam" id="PF00042">
    <property type="entry name" value="Globin"/>
    <property type="match status" value="1"/>
</dbReference>
<dbReference type="PRINTS" id="PR00612">
    <property type="entry name" value="ALPHAHAEM"/>
</dbReference>
<dbReference type="PRINTS" id="PR00815">
    <property type="entry name" value="PIHAEM"/>
</dbReference>
<dbReference type="SUPFAM" id="SSF46458">
    <property type="entry name" value="Globin-like"/>
    <property type="match status" value="1"/>
</dbReference>
<dbReference type="PROSITE" id="PS01033">
    <property type="entry name" value="GLOBIN"/>
    <property type="match status" value="1"/>
</dbReference>
<reference key="1">
    <citation type="journal article" date="1985" name="Biol. Chem. Hoppe-Seyler">
        <title>Hemoglobin of tree sparrows (Passer montanus, Passeriformes): Sequence of the major (Hb A) and minor (Hb D) components.</title>
        <authorList>
            <person name="Schneeganss D."/>
            <person name="Braunitzer G."/>
            <person name="Oberthur W."/>
            <person name="Kosters J."/>
            <person name="Grimm F."/>
        </authorList>
    </citation>
    <scope>PROTEIN SEQUENCE</scope>
</reference>
<proteinExistence type="evidence at protein level"/>
<feature type="chain" id="PRO_0000052725" description="Hemoglobin subunit alpha-A">
    <location>
        <begin position="1"/>
        <end position="141"/>
    </location>
</feature>
<feature type="domain" description="Globin" evidence="1">
    <location>
        <begin position="1"/>
        <end position="141"/>
    </location>
</feature>
<feature type="binding site" evidence="1">
    <location>
        <position position="58"/>
    </location>
    <ligand>
        <name>O2</name>
        <dbReference type="ChEBI" id="CHEBI:15379"/>
    </ligand>
</feature>
<feature type="binding site" description="proximal binding residue" evidence="1">
    <location>
        <position position="87"/>
    </location>
    <ligand>
        <name>heme b</name>
        <dbReference type="ChEBI" id="CHEBI:60344"/>
    </ligand>
    <ligandPart>
        <name>Fe</name>
        <dbReference type="ChEBI" id="CHEBI:18248"/>
    </ligandPart>
</feature>
<evidence type="ECO:0000255" key="1">
    <source>
        <dbReference type="PROSITE-ProRule" id="PRU00238"/>
    </source>
</evidence>
<comment type="function">
    <text>Involved in oxygen transport from the lung to the various peripheral tissues.</text>
</comment>
<comment type="subunit">
    <text>Heterotetramer of two alpha chains and two beta chains.</text>
</comment>
<comment type="tissue specificity">
    <text>Red blood cells.</text>
</comment>
<comment type="similarity">
    <text evidence="1">Belongs to the globin family.</text>
</comment>
<gene>
    <name type="primary">HBAA</name>
</gene>
<protein>
    <recommendedName>
        <fullName>Hemoglobin subunit alpha-A</fullName>
    </recommendedName>
    <alternativeName>
        <fullName>Alpha-A-globin</fullName>
    </alternativeName>
    <alternativeName>
        <fullName>Hemoglobin alpha-A chain</fullName>
    </alternativeName>
</protein>